<keyword id="KW-0998">Cell outer membrane</keyword>
<keyword id="KW-0903">Direct protein sequencing</keyword>
<keyword id="KW-1015">Disulfide bond</keyword>
<keyword id="KW-0406">Ion transport</keyword>
<keyword id="KW-0472">Membrane</keyword>
<keyword id="KW-0626">Porin</keyword>
<keyword id="KW-0812">Transmembrane</keyword>
<keyword id="KW-1134">Transmembrane beta strand</keyword>
<keyword id="KW-0813">Transport</keyword>
<name>OMPH_AVIGA</name>
<proteinExistence type="evidence at protein level"/>
<sequence length="22" mass="2268">ATVYNNDGTQVDVGGRFDVALG</sequence>
<feature type="chain" id="PRO_0000182820" description="Major outer membrane protein">
    <location>
        <begin position="1"/>
        <end position="22" status="greater than"/>
    </location>
</feature>
<feature type="non-terminal residue" evidence="3">
    <location>
        <position position="22"/>
    </location>
</feature>
<dbReference type="GO" id="GO:0009279">
    <property type="term" value="C:cell outer membrane"/>
    <property type="evidence" value="ECO:0007669"/>
    <property type="project" value="UniProtKB-SubCell"/>
</dbReference>
<dbReference type="GO" id="GO:0046930">
    <property type="term" value="C:pore complex"/>
    <property type="evidence" value="ECO:0007669"/>
    <property type="project" value="UniProtKB-KW"/>
</dbReference>
<dbReference type="GO" id="GO:0015288">
    <property type="term" value="F:porin activity"/>
    <property type="evidence" value="ECO:0007669"/>
    <property type="project" value="UniProtKB-KW"/>
</dbReference>
<dbReference type="GO" id="GO:0006811">
    <property type="term" value="P:monoatomic ion transport"/>
    <property type="evidence" value="ECO:0007669"/>
    <property type="project" value="UniProtKB-KW"/>
</dbReference>
<protein>
    <recommendedName>
        <fullName>Major outer membrane protein</fullName>
        <shortName>MOMP</shortName>
    </recommendedName>
    <alternativeName>
        <fullName>Outer membrane protein H</fullName>
    </alternativeName>
</protein>
<gene>
    <name type="primary">ompH</name>
</gene>
<comment type="function">
    <text evidence="1">Structural rigidity of the outer membrane of elementary bodies and porin forming, permitting diffusion of solutes through the intracellular reticulate body membrane.</text>
</comment>
<comment type="subunit">
    <text evidence="1">Disulfide bond interactions within and between MOMP molecules and other components form high molecular-weight oligomers.</text>
</comment>
<comment type="subcellular location">
    <subcellularLocation>
        <location evidence="2">Cell outer membrane</location>
        <topology evidence="2">Multi-pass membrane protein</topology>
    </subcellularLocation>
</comment>
<comment type="similarity">
    <text evidence="4">Belongs to the Gram-negative porin family.</text>
</comment>
<accession>P80454</accession>
<evidence type="ECO:0000250" key="1">
    <source>
        <dbReference type="UniProtKB" id="P80368"/>
    </source>
</evidence>
<evidence type="ECO:0000269" key="2">
    <source>
    </source>
</evidence>
<evidence type="ECO:0000303" key="3">
    <source>
    </source>
</evidence>
<evidence type="ECO:0000305" key="4"/>
<reference evidence="4" key="1">
    <citation type="journal article" date="1996" name="Zentralbl. Bakteriol.">
        <title>A comparative study of the major outer membrane proteins of the avian haemophili and Pasteurella gallinarum.</title>
        <authorList>
            <person name="Hartmann L."/>
            <person name="Schroeder W."/>
            <person name="Luebke-Becker A."/>
        </authorList>
    </citation>
    <scope>PROTEIN SEQUENCE</scope>
    <scope>SUBCELLULAR LOCATION</scope>
    <source>
        <strain>G 1720</strain>
    </source>
</reference>
<organism evidence="4">
    <name type="scientific">Avibacterium gallinarum</name>
    <name type="common">Pasteurella gallinarum</name>
    <dbReference type="NCBI Taxonomy" id="755"/>
    <lineage>
        <taxon>Bacteria</taxon>
        <taxon>Pseudomonadati</taxon>
        <taxon>Pseudomonadota</taxon>
        <taxon>Gammaproteobacteria</taxon>
        <taxon>Pasteurellales</taxon>
        <taxon>Pasteurellaceae</taxon>
        <taxon>Avibacterium</taxon>
    </lineage>
</organism>